<keyword id="KW-0028">Amino-acid biosynthesis</keyword>
<keyword id="KW-0963">Cytoplasm</keyword>
<keyword id="KW-0368">Histidine biosynthesis</keyword>
<keyword id="KW-0378">Hydrolase</keyword>
<keyword id="KW-0456">Lyase</keyword>
<keyword id="KW-0460">Magnesium</keyword>
<keyword id="KW-0479">Metal-binding</keyword>
<keyword id="KW-0511">Multifunctional enzyme</keyword>
<keyword id="KW-0862">Zinc</keyword>
<comment type="catalytic activity">
    <reaction evidence="1">
        <text>D-erythro-1-(imidazol-4-yl)glycerol 3-phosphate = 3-(imidazol-4-yl)-2-oxopropyl phosphate + H2O</text>
        <dbReference type="Rhea" id="RHEA:11040"/>
        <dbReference type="ChEBI" id="CHEBI:15377"/>
        <dbReference type="ChEBI" id="CHEBI:57766"/>
        <dbReference type="ChEBI" id="CHEBI:58278"/>
        <dbReference type="EC" id="4.2.1.19"/>
    </reaction>
</comment>
<comment type="catalytic activity">
    <reaction evidence="1">
        <text>L-histidinol phosphate + H2O = L-histidinol + phosphate</text>
        <dbReference type="Rhea" id="RHEA:14465"/>
        <dbReference type="ChEBI" id="CHEBI:15377"/>
        <dbReference type="ChEBI" id="CHEBI:43474"/>
        <dbReference type="ChEBI" id="CHEBI:57699"/>
        <dbReference type="ChEBI" id="CHEBI:57980"/>
        <dbReference type="EC" id="3.1.3.15"/>
    </reaction>
</comment>
<comment type="cofactor">
    <cofactor evidence="1">
        <name>Mg(2+)</name>
        <dbReference type="ChEBI" id="CHEBI:18420"/>
    </cofactor>
</comment>
<comment type="cofactor">
    <cofactor evidence="1">
        <name>Zn(2+)</name>
        <dbReference type="ChEBI" id="CHEBI:29105"/>
    </cofactor>
</comment>
<comment type="pathway">
    <text evidence="1">Amino-acid biosynthesis; L-histidine biosynthesis; L-histidine from 5-phospho-alpha-D-ribose 1-diphosphate: step 6/9.</text>
</comment>
<comment type="pathway">
    <text evidence="1">Amino-acid biosynthesis; L-histidine biosynthesis; L-histidine from 5-phospho-alpha-D-ribose 1-diphosphate: step 8/9.</text>
</comment>
<comment type="subcellular location">
    <subcellularLocation>
        <location evidence="1">Cytoplasm</location>
    </subcellularLocation>
</comment>
<comment type="similarity">
    <text evidence="1">In the N-terminal section; belongs to the histidinol-phosphatase family.</text>
</comment>
<comment type="similarity">
    <text evidence="1">In the C-terminal section; belongs to the imidazoleglycerol-phosphate dehydratase family.</text>
</comment>
<feature type="chain" id="PRO_1000149081" description="Histidine biosynthesis bifunctional protein HisB">
    <location>
        <begin position="1"/>
        <end position="353"/>
    </location>
</feature>
<feature type="region of interest" description="Histidinol-phosphatase" evidence="1">
    <location>
        <begin position="1"/>
        <end position="164"/>
    </location>
</feature>
<feature type="region of interest" description="Imidazoleglycerol-phosphate dehydratase" evidence="1">
    <location>
        <begin position="165"/>
        <end position="353"/>
    </location>
</feature>
<feature type="active site" description="Nucleophile" evidence="1">
    <location>
        <position position="9"/>
    </location>
</feature>
<feature type="active site" description="Proton donor" evidence="1">
    <location>
        <position position="11"/>
    </location>
</feature>
<feature type="binding site" evidence="1">
    <location>
        <position position="9"/>
    </location>
    <ligand>
        <name>Mg(2+)</name>
        <dbReference type="ChEBI" id="CHEBI:18420"/>
    </ligand>
</feature>
<feature type="binding site" evidence="1">
    <location>
        <position position="11"/>
    </location>
    <ligand>
        <name>Mg(2+)</name>
        <dbReference type="ChEBI" id="CHEBI:18420"/>
    </ligand>
</feature>
<feature type="binding site" evidence="1">
    <location>
        <position position="93"/>
    </location>
    <ligand>
        <name>Zn(2+)</name>
        <dbReference type="ChEBI" id="CHEBI:29105"/>
    </ligand>
</feature>
<feature type="binding site" evidence="1">
    <location>
        <position position="95"/>
    </location>
    <ligand>
        <name>Zn(2+)</name>
        <dbReference type="ChEBI" id="CHEBI:29105"/>
    </ligand>
</feature>
<feature type="binding site" evidence="1">
    <location>
        <position position="101"/>
    </location>
    <ligand>
        <name>Zn(2+)</name>
        <dbReference type="ChEBI" id="CHEBI:29105"/>
    </ligand>
</feature>
<feature type="binding site" evidence="1">
    <location>
        <position position="103"/>
    </location>
    <ligand>
        <name>Zn(2+)</name>
        <dbReference type="ChEBI" id="CHEBI:29105"/>
    </ligand>
</feature>
<feature type="binding site" evidence="1">
    <location>
        <position position="128"/>
    </location>
    <ligand>
        <name>Mg(2+)</name>
        <dbReference type="ChEBI" id="CHEBI:18420"/>
    </ligand>
</feature>
<evidence type="ECO:0000255" key="1">
    <source>
        <dbReference type="HAMAP-Rule" id="MF_01022"/>
    </source>
</evidence>
<dbReference type="EC" id="3.1.3.15" evidence="1"/>
<dbReference type="EC" id="4.2.1.19" evidence="1"/>
<dbReference type="EMBL" id="CP001158">
    <property type="protein sequence ID" value="ACL29923.1"/>
    <property type="molecule type" value="Genomic_DNA"/>
</dbReference>
<dbReference type="RefSeq" id="WP_009874057.1">
    <property type="nucleotide sequence ID" value="NC_011834.1"/>
</dbReference>
<dbReference type="SMR" id="B8D708"/>
<dbReference type="KEGG" id="bau:BUAPTUC7_101"/>
<dbReference type="HOGENOM" id="CLU_044308_0_0_6"/>
<dbReference type="UniPathway" id="UPA00031">
    <property type="reaction ID" value="UER00011"/>
</dbReference>
<dbReference type="UniPathway" id="UPA00031">
    <property type="reaction ID" value="UER00013"/>
</dbReference>
<dbReference type="GO" id="GO:0005737">
    <property type="term" value="C:cytoplasm"/>
    <property type="evidence" value="ECO:0007669"/>
    <property type="project" value="UniProtKB-SubCell"/>
</dbReference>
<dbReference type="GO" id="GO:0004401">
    <property type="term" value="F:histidinol-phosphatase activity"/>
    <property type="evidence" value="ECO:0007669"/>
    <property type="project" value="UniProtKB-UniRule"/>
</dbReference>
<dbReference type="GO" id="GO:0004424">
    <property type="term" value="F:imidazoleglycerol-phosphate dehydratase activity"/>
    <property type="evidence" value="ECO:0007669"/>
    <property type="project" value="UniProtKB-UniRule"/>
</dbReference>
<dbReference type="GO" id="GO:0046872">
    <property type="term" value="F:metal ion binding"/>
    <property type="evidence" value="ECO:0007669"/>
    <property type="project" value="UniProtKB-KW"/>
</dbReference>
<dbReference type="GO" id="GO:0000105">
    <property type="term" value="P:L-histidine biosynthetic process"/>
    <property type="evidence" value="ECO:0007669"/>
    <property type="project" value="UniProtKB-UniRule"/>
</dbReference>
<dbReference type="CDD" id="cd07914">
    <property type="entry name" value="IGPD"/>
    <property type="match status" value="1"/>
</dbReference>
<dbReference type="FunFam" id="3.30.230.40:FF:000001">
    <property type="entry name" value="Imidazoleglycerol-phosphate dehydratase HisB"/>
    <property type="match status" value="1"/>
</dbReference>
<dbReference type="FunFam" id="3.30.230.40:FF:000003">
    <property type="entry name" value="Imidazoleglycerol-phosphate dehydratase HisB"/>
    <property type="match status" value="1"/>
</dbReference>
<dbReference type="Gene3D" id="3.40.50.1000">
    <property type="entry name" value="HAD superfamily/HAD-like"/>
    <property type="match status" value="1"/>
</dbReference>
<dbReference type="Gene3D" id="3.30.230.40">
    <property type="entry name" value="Imidazole glycerol phosphate dehydratase, domain 1"/>
    <property type="match status" value="2"/>
</dbReference>
<dbReference type="HAMAP" id="MF_01022">
    <property type="entry name" value="Bifunc_HisB"/>
    <property type="match status" value="1"/>
</dbReference>
<dbReference type="HAMAP" id="MF_00076">
    <property type="entry name" value="HisB"/>
    <property type="match status" value="1"/>
</dbReference>
<dbReference type="InterPro" id="IPR036412">
    <property type="entry name" value="HAD-like_sf"/>
</dbReference>
<dbReference type="InterPro" id="IPR006549">
    <property type="entry name" value="HAD-SF_hydro_IIIA"/>
</dbReference>
<dbReference type="InterPro" id="IPR023214">
    <property type="entry name" value="HAD_sf"/>
</dbReference>
<dbReference type="InterPro" id="IPR020566">
    <property type="entry name" value="His_synth_bifunc_HisB"/>
</dbReference>
<dbReference type="InterPro" id="IPR005954">
    <property type="entry name" value="HisB_N"/>
</dbReference>
<dbReference type="InterPro" id="IPR006543">
    <property type="entry name" value="Histidinol-phos"/>
</dbReference>
<dbReference type="InterPro" id="IPR038494">
    <property type="entry name" value="IGPD_sf"/>
</dbReference>
<dbReference type="InterPro" id="IPR000807">
    <property type="entry name" value="ImidazoleglycerolP_deHydtase"/>
</dbReference>
<dbReference type="InterPro" id="IPR020565">
    <property type="entry name" value="ImidazoleglycerP_deHydtase_CS"/>
</dbReference>
<dbReference type="InterPro" id="IPR013954">
    <property type="entry name" value="PNK3P"/>
</dbReference>
<dbReference type="InterPro" id="IPR020568">
    <property type="entry name" value="Ribosomal_Su5_D2-typ_SF"/>
</dbReference>
<dbReference type="NCBIfam" id="TIGR01662">
    <property type="entry name" value="HAD-SF-IIIA"/>
    <property type="match status" value="1"/>
</dbReference>
<dbReference type="NCBIfam" id="TIGR01261">
    <property type="entry name" value="hisB_Nterm"/>
    <property type="match status" value="1"/>
</dbReference>
<dbReference type="NCBIfam" id="TIGR01656">
    <property type="entry name" value="Histidinol-ppas"/>
    <property type="match status" value="1"/>
</dbReference>
<dbReference type="NCBIfam" id="NF002111">
    <property type="entry name" value="PRK00951.2-1"/>
    <property type="match status" value="1"/>
</dbReference>
<dbReference type="NCBIfam" id="NF002114">
    <property type="entry name" value="PRK00951.2-4"/>
    <property type="match status" value="1"/>
</dbReference>
<dbReference type="NCBIfam" id="NF003937">
    <property type="entry name" value="PRK05446.1"/>
    <property type="match status" value="1"/>
</dbReference>
<dbReference type="PANTHER" id="PTHR23133:SF2">
    <property type="entry name" value="IMIDAZOLEGLYCEROL-PHOSPHATE DEHYDRATASE"/>
    <property type="match status" value="1"/>
</dbReference>
<dbReference type="PANTHER" id="PTHR23133">
    <property type="entry name" value="IMIDAZOLEGLYCEROL-PHOSPHATE DEHYDRATASE HIS7"/>
    <property type="match status" value="1"/>
</dbReference>
<dbReference type="Pfam" id="PF00475">
    <property type="entry name" value="IGPD"/>
    <property type="match status" value="1"/>
</dbReference>
<dbReference type="Pfam" id="PF08645">
    <property type="entry name" value="PNK3P"/>
    <property type="match status" value="1"/>
</dbReference>
<dbReference type="SUPFAM" id="SSF56784">
    <property type="entry name" value="HAD-like"/>
    <property type="match status" value="1"/>
</dbReference>
<dbReference type="SUPFAM" id="SSF54211">
    <property type="entry name" value="Ribosomal protein S5 domain 2-like"/>
    <property type="match status" value="2"/>
</dbReference>
<dbReference type="PROSITE" id="PS00954">
    <property type="entry name" value="IGP_DEHYDRATASE_1"/>
    <property type="match status" value="1"/>
</dbReference>
<dbReference type="PROSITE" id="PS00955">
    <property type="entry name" value="IGP_DEHYDRATASE_2"/>
    <property type="match status" value="1"/>
</dbReference>
<gene>
    <name evidence="1" type="primary">hisB</name>
    <name type="ordered locus">BUAPTUC7_101</name>
</gene>
<name>HIS7_BUCAT</name>
<proteinExistence type="inferred from homology"/>
<reference key="1">
    <citation type="journal article" date="2009" name="Science">
        <title>The dynamics and time scale of ongoing genomic erosion in symbiotic bacteria.</title>
        <authorList>
            <person name="Moran N.A."/>
            <person name="McLaughlin H.J."/>
            <person name="Sorek R."/>
        </authorList>
    </citation>
    <scope>NUCLEOTIDE SEQUENCE [LARGE SCALE GENOMIC DNA]</scope>
    <source>
        <strain>Tuc7</strain>
    </source>
</reference>
<sequence length="353" mass="40836">MKNKILFIDRDGTLIDEPINTFQVDSINKLVFKKYVISSLRKLVELDYKLIMITNQDGLGTESFPLQDFSTAHLFMLSVFRSEGVIFDDILICPHFLDDDCVCRKPKIKMIEPWLDKIDLKKSYVIGDRDTDMQLSNNLKIKGIKYKEDICNWLHITKYIIKHNRYAEIIRRTKETKVSIKVWLDLEETSKIDTGVKFFDHMLEQLSVHSGICMNISVQGDLDIDDHHTIEDTGIVLGEALLQALGKKNGLSRFGFYLPMDESRSNCIMDISNRPYLNFKAKFNHKMAGDLSTNMVEHFFYSLCYSMKITLHLYAEGKNDHHCIESLFKVFGRTLRQAIKIEGNMLPTSKGIL</sequence>
<accession>B8D708</accession>
<protein>
    <recommendedName>
        <fullName evidence="1">Histidine biosynthesis bifunctional protein HisB</fullName>
    </recommendedName>
    <domain>
        <recommendedName>
            <fullName evidence="1">Histidinol-phosphatase</fullName>
            <ecNumber evidence="1">3.1.3.15</ecNumber>
        </recommendedName>
    </domain>
    <domain>
        <recommendedName>
            <fullName evidence="1">Imidazoleglycerol-phosphate dehydratase</fullName>
            <shortName evidence="1">IGPD</shortName>
            <ecNumber evidence="1">4.2.1.19</ecNumber>
        </recommendedName>
    </domain>
</protein>
<organism>
    <name type="scientific">Buchnera aphidicola subsp. Acyrthosiphon pisum (strain Tuc7)</name>
    <dbReference type="NCBI Taxonomy" id="561501"/>
    <lineage>
        <taxon>Bacteria</taxon>
        <taxon>Pseudomonadati</taxon>
        <taxon>Pseudomonadota</taxon>
        <taxon>Gammaproteobacteria</taxon>
        <taxon>Enterobacterales</taxon>
        <taxon>Erwiniaceae</taxon>
        <taxon>Buchnera</taxon>
    </lineage>
</organism>